<sequence>MDIILATSSPRRINLLKMLNIKFKTVAPRIKENINETDPEKLVKKLSKLKALSIKEKGIIISADTIVYHNNKVLGKPKNLDNAFNMLKELSSKWHTVYTGVTIIEKDDIITFCEKTMVKFKKLSDELIRYYISTSKPLDKAGAYGIQELGAILVEKIEGDYYNVVGLPISRIWDILWDRRII</sequence>
<accession>A6LJI7</accession>
<proteinExistence type="inferred from homology"/>
<reference key="1">
    <citation type="submission" date="2007-05" db="EMBL/GenBank/DDBJ databases">
        <title>Complete sequence of Thermosipho melanesiensis BI429.</title>
        <authorList>
            <consortium name="US DOE Joint Genome Institute"/>
            <person name="Copeland A."/>
            <person name="Lucas S."/>
            <person name="Lapidus A."/>
            <person name="Barry K."/>
            <person name="Glavina del Rio T."/>
            <person name="Dalin E."/>
            <person name="Tice H."/>
            <person name="Pitluck S."/>
            <person name="Chertkov O."/>
            <person name="Brettin T."/>
            <person name="Bruce D."/>
            <person name="Detter J.C."/>
            <person name="Han C."/>
            <person name="Schmutz J."/>
            <person name="Larimer F."/>
            <person name="Land M."/>
            <person name="Hauser L."/>
            <person name="Kyrpides N."/>
            <person name="Mikhailova N."/>
            <person name="Nelson K."/>
            <person name="Gogarten J.P."/>
            <person name="Noll K."/>
            <person name="Richardson P."/>
        </authorList>
    </citation>
    <scope>NUCLEOTIDE SEQUENCE [LARGE SCALE GENOMIC DNA]</scope>
    <source>
        <strain>DSM 12029 / CIP 104789 / BI429</strain>
    </source>
</reference>
<gene>
    <name type="ordered locus">Tmel_0214</name>
</gene>
<keyword id="KW-0963">Cytoplasm</keyword>
<keyword id="KW-0378">Hydrolase</keyword>
<keyword id="KW-0546">Nucleotide metabolism</keyword>
<dbReference type="EC" id="3.6.1.9" evidence="1"/>
<dbReference type="EMBL" id="CP000716">
    <property type="protein sequence ID" value="ABR30088.1"/>
    <property type="molecule type" value="Genomic_DNA"/>
</dbReference>
<dbReference type="RefSeq" id="WP_012056449.1">
    <property type="nucleotide sequence ID" value="NC_009616.1"/>
</dbReference>
<dbReference type="SMR" id="A6LJI7"/>
<dbReference type="STRING" id="391009.Tmel_0214"/>
<dbReference type="KEGG" id="tme:Tmel_0214"/>
<dbReference type="eggNOG" id="COG0424">
    <property type="taxonomic scope" value="Bacteria"/>
</dbReference>
<dbReference type="HOGENOM" id="CLU_040416_0_0_0"/>
<dbReference type="OrthoDB" id="9807767at2"/>
<dbReference type="Proteomes" id="UP000001110">
    <property type="component" value="Chromosome"/>
</dbReference>
<dbReference type="GO" id="GO:0005737">
    <property type="term" value="C:cytoplasm"/>
    <property type="evidence" value="ECO:0007669"/>
    <property type="project" value="UniProtKB-SubCell"/>
</dbReference>
<dbReference type="GO" id="GO:0036218">
    <property type="term" value="F:dTTP diphosphatase activity"/>
    <property type="evidence" value="ECO:0007669"/>
    <property type="project" value="RHEA"/>
</dbReference>
<dbReference type="GO" id="GO:0036221">
    <property type="term" value="F:UTP diphosphatase activity"/>
    <property type="evidence" value="ECO:0007669"/>
    <property type="project" value="RHEA"/>
</dbReference>
<dbReference type="GO" id="GO:0009117">
    <property type="term" value="P:nucleotide metabolic process"/>
    <property type="evidence" value="ECO:0007669"/>
    <property type="project" value="UniProtKB-KW"/>
</dbReference>
<dbReference type="CDD" id="cd00555">
    <property type="entry name" value="Maf"/>
    <property type="match status" value="1"/>
</dbReference>
<dbReference type="Gene3D" id="3.90.950.10">
    <property type="match status" value="1"/>
</dbReference>
<dbReference type="HAMAP" id="MF_00528">
    <property type="entry name" value="Maf"/>
    <property type="match status" value="1"/>
</dbReference>
<dbReference type="InterPro" id="IPR029001">
    <property type="entry name" value="ITPase-like_fam"/>
</dbReference>
<dbReference type="InterPro" id="IPR003697">
    <property type="entry name" value="Maf-like"/>
</dbReference>
<dbReference type="NCBIfam" id="TIGR00172">
    <property type="entry name" value="maf"/>
    <property type="match status" value="1"/>
</dbReference>
<dbReference type="PANTHER" id="PTHR43213">
    <property type="entry name" value="BIFUNCTIONAL DTTP/UTP PYROPHOSPHATASE/METHYLTRANSFERASE PROTEIN-RELATED"/>
    <property type="match status" value="1"/>
</dbReference>
<dbReference type="PANTHER" id="PTHR43213:SF5">
    <property type="entry name" value="BIFUNCTIONAL DTTP_UTP PYROPHOSPHATASE_METHYLTRANSFERASE PROTEIN-RELATED"/>
    <property type="match status" value="1"/>
</dbReference>
<dbReference type="Pfam" id="PF02545">
    <property type="entry name" value="Maf"/>
    <property type="match status" value="1"/>
</dbReference>
<dbReference type="PIRSF" id="PIRSF006305">
    <property type="entry name" value="Maf"/>
    <property type="match status" value="1"/>
</dbReference>
<dbReference type="SUPFAM" id="SSF52972">
    <property type="entry name" value="ITPase-like"/>
    <property type="match status" value="1"/>
</dbReference>
<organism>
    <name type="scientific">Thermosipho melanesiensis (strain DSM 12029 / CIP 104789 / BI429)</name>
    <dbReference type="NCBI Taxonomy" id="391009"/>
    <lineage>
        <taxon>Bacteria</taxon>
        <taxon>Thermotogati</taxon>
        <taxon>Thermotogota</taxon>
        <taxon>Thermotogae</taxon>
        <taxon>Thermotogales</taxon>
        <taxon>Fervidobacteriaceae</taxon>
        <taxon>Thermosipho</taxon>
    </lineage>
</organism>
<protein>
    <recommendedName>
        <fullName evidence="1">dTTP/UTP pyrophosphatase</fullName>
        <shortName evidence="1">dTTPase/UTPase</shortName>
        <ecNumber evidence="1">3.6.1.9</ecNumber>
    </recommendedName>
    <alternativeName>
        <fullName evidence="1">Nucleoside triphosphate pyrophosphatase</fullName>
    </alternativeName>
    <alternativeName>
        <fullName evidence="1">Nucleotide pyrophosphatase</fullName>
        <shortName evidence="1">Nucleotide PPase</shortName>
    </alternativeName>
</protein>
<evidence type="ECO:0000255" key="1">
    <source>
        <dbReference type="HAMAP-Rule" id="MF_00528"/>
    </source>
</evidence>
<name>NTPPA_THEM4</name>
<comment type="function">
    <text evidence="1">Nucleoside triphosphate pyrophosphatase that hydrolyzes dTTP and UTP. May have a dual role in cell division arrest and in preventing the incorporation of modified nucleotides into cellular nucleic acids.</text>
</comment>
<comment type="catalytic activity">
    <reaction evidence="1">
        <text>dTTP + H2O = dTMP + diphosphate + H(+)</text>
        <dbReference type="Rhea" id="RHEA:28534"/>
        <dbReference type="ChEBI" id="CHEBI:15377"/>
        <dbReference type="ChEBI" id="CHEBI:15378"/>
        <dbReference type="ChEBI" id="CHEBI:33019"/>
        <dbReference type="ChEBI" id="CHEBI:37568"/>
        <dbReference type="ChEBI" id="CHEBI:63528"/>
        <dbReference type="EC" id="3.6.1.9"/>
    </reaction>
</comment>
<comment type="catalytic activity">
    <reaction evidence="1">
        <text>UTP + H2O = UMP + diphosphate + H(+)</text>
        <dbReference type="Rhea" id="RHEA:29395"/>
        <dbReference type="ChEBI" id="CHEBI:15377"/>
        <dbReference type="ChEBI" id="CHEBI:15378"/>
        <dbReference type="ChEBI" id="CHEBI:33019"/>
        <dbReference type="ChEBI" id="CHEBI:46398"/>
        <dbReference type="ChEBI" id="CHEBI:57865"/>
        <dbReference type="EC" id="3.6.1.9"/>
    </reaction>
</comment>
<comment type="cofactor">
    <cofactor evidence="1">
        <name>a divalent metal cation</name>
        <dbReference type="ChEBI" id="CHEBI:60240"/>
    </cofactor>
</comment>
<comment type="subcellular location">
    <subcellularLocation>
        <location evidence="1">Cytoplasm</location>
    </subcellularLocation>
</comment>
<comment type="similarity">
    <text evidence="1">Belongs to the Maf family. YhdE subfamily.</text>
</comment>
<feature type="chain" id="PRO_1000127798" description="dTTP/UTP pyrophosphatase">
    <location>
        <begin position="1"/>
        <end position="182"/>
    </location>
</feature>
<feature type="active site" description="Proton acceptor" evidence="1">
    <location>
        <position position="64"/>
    </location>
</feature>
<feature type="site" description="Important for substrate specificity" evidence="1">
    <location>
        <position position="11"/>
    </location>
</feature>
<feature type="site" description="Important for substrate specificity" evidence="1">
    <location>
        <position position="65"/>
    </location>
</feature>
<feature type="site" description="Important for substrate specificity" evidence="1">
    <location>
        <position position="147"/>
    </location>
</feature>